<dbReference type="EMBL" id="AP009123">
    <property type="protein sequence ID" value="BAF41289.1"/>
    <property type="molecule type" value="Genomic_DNA"/>
</dbReference>
<dbReference type="EMBL" id="AP009123">
    <property type="protein sequence ID" value="BAF41309.1"/>
    <property type="molecule type" value="Genomic_DNA"/>
</dbReference>
<dbReference type="SMR" id="A0ZZ77"/>
<dbReference type="GO" id="GO:0009507">
    <property type="term" value="C:chloroplast"/>
    <property type="evidence" value="ECO:0007669"/>
    <property type="project" value="UniProtKB-SubCell"/>
</dbReference>
<dbReference type="GO" id="GO:1990904">
    <property type="term" value="C:ribonucleoprotein complex"/>
    <property type="evidence" value="ECO:0007669"/>
    <property type="project" value="UniProtKB-KW"/>
</dbReference>
<dbReference type="GO" id="GO:0005840">
    <property type="term" value="C:ribosome"/>
    <property type="evidence" value="ECO:0007669"/>
    <property type="project" value="UniProtKB-KW"/>
</dbReference>
<dbReference type="GO" id="GO:0003729">
    <property type="term" value="F:mRNA binding"/>
    <property type="evidence" value="ECO:0007669"/>
    <property type="project" value="UniProtKB-ARBA"/>
</dbReference>
<dbReference type="GO" id="GO:0019843">
    <property type="term" value="F:rRNA binding"/>
    <property type="evidence" value="ECO:0007669"/>
    <property type="project" value="UniProtKB-UniRule"/>
</dbReference>
<dbReference type="GO" id="GO:0003735">
    <property type="term" value="F:structural constituent of ribosome"/>
    <property type="evidence" value="ECO:0007669"/>
    <property type="project" value="InterPro"/>
</dbReference>
<dbReference type="GO" id="GO:0006412">
    <property type="term" value="P:translation"/>
    <property type="evidence" value="ECO:0007669"/>
    <property type="project" value="UniProtKB-UniRule"/>
</dbReference>
<dbReference type="FunFam" id="3.30.70.330:FF:000002">
    <property type="entry name" value="50S ribosomal protein L23, chloroplastic"/>
    <property type="match status" value="1"/>
</dbReference>
<dbReference type="Gene3D" id="3.30.70.330">
    <property type="match status" value="1"/>
</dbReference>
<dbReference type="HAMAP" id="MF_01369_B">
    <property type="entry name" value="Ribosomal_uL23_B"/>
    <property type="match status" value="1"/>
</dbReference>
<dbReference type="InterPro" id="IPR012677">
    <property type="entry name" value="Nucleotide-bd_a/b_plait_sf"/>
</dbReference>
<dbReference type="InterPro" id="IPR013025">
    <property type="entry name" value="Ribosomal_uL23-like"/>
</dbReference>
<dbReference type="InterPro" id="IPR012678">
    <property type="entry name" value="Ribosomal_uL23/eL15/eS24_sf"/>
</dbReference>
<dbReference type="InterPro" id="IPR001014">
    <property type="entry name" value="Ribosomal_uL23_CS"/>
</dbReference>
<dbReference type="PANTHER" id="PTHR11620">
    <property type="entry name" value="60S RIBOSOMAL PROTEIN L23A"/>
    <property type="match status" value="1"/>
</dbReference>
<dbReference type="Pfam" id="PF00276">
    <property type="entry name" value="Ribosomal_L23"/>
    <property type="match status" value="1"/>
</dbReference>
<dbReference type="SUPFAM" id="SSF54189">
    <property type="entry name" value="Ribosomal proteins S24e, L23 and L15e"/>
    <property type="match status" value="1"/>
</dbReference>
<dbReference type="PROSITE" id="PS00050">
    <property type="entry name" value="RIBOSOMAL_L23"/>
    <property type="match status" value="1"/>
</dbReference>
<name>RK23_GOSBA</name>
<evidence type="ECO:0000250" key="1"/>
<evidence type="ECO:0000305" key="2"/>
<accession>A0ZZ77</accession>
<organism>
    <name type="scientific">Gossypium barbadense</name>
    <name type="common">Sea Island cotton</name>
    <name type="synonym">Hibiscus barbadensis</name>
    <dbReference type="NCBI Taxonomy" id="3634"/>
    <lineage>
        <taxon>Eukaryota</taxon>
        <taxon>Viridiplantae</taxon>
        <taxon>Streptophyta</taxon>
        <taxon>Embryophyta</taxon>
        <taxon>Tracheophyta</taxon>
        <taxon>Spermatophyta</taxon>
        <taxon>Magnoliopsida</taxon>
        <taxon>eudicotyledons</taxon>
        <taxon>Gunneridae</taxon>
        <taxon>Pentapetalae</taxon>
        <taxon>rosids</taxon>
        <taxon>malvids</taxon>
        <taxon>Malvales</taxon>
        <taxon>Malvaceae</taxon>
        <taxon>Malvoideae</taxon>
        <taxon>Gossypium</taxon>
    </lineage>
</organism>
<reference key="1">
    <citation type="journal article" date="2006" name="Genes Genet. Syst.">
        <title>Complete nucleotide sequence of the cotton (Gossypium barbadense L.) chloroplast genome with a comparative analysis of sequences among 9 dicot plants.</title>
        <authorList>
            <person name="Ibrahim R.I.H."/>
            <person name="Azuma J."/>
            <person name="Sakamoto M."/>
        </authorList>
    </citation>
    <scope>NUCLEOTIDE SEQUENCE [LARGE SCALE GENOMIC DNA]</scope>
</reference>
<geneLocation type="chloroplast"/>
<proteinExistence type="inferred from homology"/>
<feature type="chain" id="PRO_0000277154" description="Large ribosomal subunit protein uL23cz/uL23cy">
    <location>
        <begin position="1"/>
        <end position="93"/>
    </location>
</feature>
<sequence length="93" mass="10728">MDGIKYVVVTDKSIRLLVKNQYTSNVESGSTRTEIKHWVELFFGVKVIAMNSHRLPGKGRRMGPIMGHTMHYRRMIITLQPGYSIPPLRTKRT</sequence>
<comment type="function">
    <text evidence="1">Binds to 23S rRNA.</text>
</comment>
<comment type="subunit">
    <text evidence="1">Part of the 50S ribosomal subunit.</text>
</comment>
<comment type="subcellular location">
    <subcellularLocation>
        <location>Plastid</location>
        <location>Chloroplast</location>
    </subcellularLocation>
</comment>
<comment type="similarity">
    <text evidence="2">Belongs to the universal ribosomal protein uL23 family.</text>
</comment>
<gene>
    <name type="primary">rpl23-A</name>
</gene>
<gene>
    <name type="primary">rpl23-B</name>
</gene>
<protein>
    <recommendedName>
        <fullName evidence="2">Large ribosomal subunit protein uL23cz/uL23cy</fullName>
    </recommendedName>
    <alternativeName>
        <fullName>50S ribosomal protein L23, chloroplastic</fullName>
    </alternativeName>
</protein>
<keyword id="KW-0150">Chloroplast</keyword>
<keyword id="KW-0934">Plastid</keyword>
<keyword id="KW-0687">Ribonucleoprotein</keyword>
<keyword id="KW-0689">Ribosomal protein</keyword>
<keyword id="KW-0694">RNA-binding</keyword>
<keyword id="KW-0699">rRNA-binding</keyword>